<dbReference type="EMBL" id="AE015929">
    <property type="protein sequence ID" value="AAO04865.1"/>
    <property type="molecule type" value="Genomic_DNA"/>
</dbReference>
<dbReference type="RefSeq" id="NP_764821.1">
    <property type="nucleotide sequence ID" value="NC_004461.1"/>
</dbReference>
<dbReference type="RefSeq" id="WP_002468806.1">
    <property type="nucleotide sequence ID" value="NZ_WBME01000008.1"/>
</dbReference>
<dbReference type="SMR" id="Q8CP18"/>
<dbReference type="KEGG" id="sep:SE_1266"/>
<dbReference type="PATRIC" id="fig|176280.10.peg.1235"/>
<dbReference type="eggNOG" id="COG0484">
    <property type="taxonomic scope" value="Bacteria"/>
</dbReference>
<dbReference type="HOGENOM" id="CLU_017633_0_7_9"/>
<dbReference type="OrthoDB" id="9779889at2"/>
<dbReference type="Proteomes" id="UP000001411">
    <property type="component" value="Chromosome"/>
</dbReference>
<dbReference type="GO" id="GO:0005737">
    <property type="term" value="C:cytoplasm"/>
    <property type="evidence" value="ECO:0007669"/>
    <property type="project" value="UniProtKB-SubCell"/>
</dbReference>
<dbReference type="GO" id="GO:0005524">
    <property type="term" value="F:ATP binding"/>
    <property type="evidence" value="ECO:0007669"/>
    <property type="project" value="InterPro"/>
</dbReference>
<dbReference type="GO" id="GO:0031072">
    <property type="term" value="F:heat shock protein binding"/>
    <property type="evidence" value="ECO:0007669"/>
    <property type="project" value="InterPro"/>
</dbReference>
<dbReference type="GO" id="GO:0051082">
    <property type="term" value="F:unfolded protein binding"/>
    <property type="evidence" value="ECO:0007669"/>
    <property type="project" value="UniProtKB-UniRule"/>
</dbReference>
<dbReference type="GO" id="GO:0008270">
    <property type="term" value="F:zinc ion binding"/>
    <property type="evidence" value="ECO:0007669"/>
    <property type="project" value="UniProtKB-UniRule"/>
</dbReference>
<dbReference type="GO" id="GO:0051085">
    <property type="term" value="P:chaperone cofactor-dependent protein refolding"/>
    <property type="evidence" value="ECO:0007669"/>
    <property type="project" value="TreeGrafter"/>
</dbReference>
<dbReference type="GO" id="GO:0006260">
    <property type="term" value="P:DNA replication"/>
    <property type="evidence" value="ECO:0007669"/>
    <property type="project" value="UniProtKB-KW"/>
</dbReference>
<dbReference type="GO" id="GO:0042026">
    <property type="term" value="P:protein refolding"/>
    <property type="evidence" value="ECO:0007669"/>
    <property type="project" value="TreeGrafter"/>
</dbReference>
<dbReference type="GO" id="GO:0009408">
    <property type="term" value="P:response to heat"/>
    <property type="evidence" value="ECO:0007669"/>
    <property type="project" value="InterPro"/>
</dbReference>
<dbReference type="CDD" id="cd06257">
    <property type="entry name" value="DnaJ"/>
    <property type="match status" value="1"/>
</dbReference>
<dbReference type="CDD" id="cd10747">
    <property type="entry name" value="DnaJ_C"/>
    <property type="match status" value="1"/>
</dbReference>
<dbReference type="CDD" id="cd10719">
    <property type="entry name" value="DnaJ_zf"/>
    <property type="match status" value="1"/>
</dbReference>
<dbReference type="FunFam" id="1.10.287.110:FF:000031">
    <property type="entry name" value="Molecular chaperone DnaJ"/>
    <property type="match status" value="1"/>
</dbReference>
<dbReference type="FunFam" id="2.10.230.10:FF:000002">
    <property type="entry name" value="Molecular chaperone DnaJ"/>
    <property type="match status" value="1"/>
</dbReference>
<dbReference type="FunFam" id="2.60.260.20:FF:000004">
    <property type="entry name" value="Molecular chaperone DnaJ"/>
    <property type="match status" value="1"/>
</dbReference>
<dbReference type="Gene3D" id="1.10.287.110">
    <property type="entry name" value="DnaJ domain"/>
    <property type="match status" value="1"/>
</dbReference>
<dbReference type="Gene3D" id="2.10.230.10">
    <property type="entry name" value="Heat shock protein DnaJ, cysteine-rich domain"/>
    <property type="match status" value="1"/>
</dbReference>
<dbReference type="Gene3D" id="2.60.260.20">
    <property type="entry name" value="Urease metallochaperone UreE, N-terminal domain"/>
    <property type="match status" value="2"/>
</dbReference>
<dbReference type="HAMAP" id="MF_01152">
    <property type="entry name" value="DnaJ"/>
    <property type="match status" value="1"/>
</dbReference>
<dbReference type="InterPro" id="IPR012724">
    <property type="entry name" value="DnaJ"/>
</dbReference>
<dbReference type="InterPro" id="IPR002939">
    <property type="entry name" value="DnaJ_C"/>
</dbReference>
<dbReference type="InterPro" id="IPR001623">
    <property type="entry name" value="DnaJ_domain"/>
</dbReference>
<dbReference type="InterPro" id="IPR018253">
    <property type="entry name" value="DnaJ_domain_CS"/>
</dbReference>
<dbReference type="InterPro" id="IPR008971">
    <property type="entry name" value="HSP40/DnaJ_pept-bd"/>
</dbReference>
<dbReference type="InterPro" id="IPR001305">
    <property type="entry name" value="HSP_DnaJ_Cys-rich_dom"/>
</dbReference>
<dbReference type="InterPro" id="IPR036410">
    <property type="entry name" value="HSP_DnaJ_Cys-rich_dom_sf"/>
</dbReference>
<dbReference type="InterPro" id="IPR036869">
    <property type="entry name" value="J_dom_sf"/>
</dbReference>
<dbReference type="NCBIfam" id="TIGR02349">
    <property type="entry name" value="DnaJ_bact"/>
    <property type="match status" value="1"/>
</dbReference>
<dbReference type="NCBIfam" id="NF008035">
    <property type="entry name" value="PRK10767.1"/>
    <property type="match status" value="1"/>
</dbReference>
<dbReference type="NCBIfam" id="NF010869">
    <property type="entry name" value="PRK14276.1"/>
    <property type="match status" value="1"/>
</dbReference>
<dbReference type="NCBIfam" id="NF010873">
    <property type="entry name" value="PRK14280.1"/>
    <property type="match status" value="1"/>
</dbReference>
<dbReference type="PANTHER" id="PTHR43096:SF48">
    <property type="entry name" value="CHAPERONE PROTEIN DNAJ"/>
    <property type="match status" value="1"/>
</dbReference>
<dbReference type="PANTHER" id="PTHR43096">
    <property type="entry name" value="DNAJ HOMOLOG 1, MITOCHONDRIAL-RELATED"/>
    <property type="match status" value="1"/>
</dbReference>
<dbReference type="Pfam" id="PF00226">
    <property type="entry name" value="DnaJ"/>
    <property type="match status" value="1"/>
</dbReference>
<dbReference type="Pfam" id="PF01556">
    <property type="entry name" value="DnaJ_C"/>
    <property type="match status" value="1"/>
</dbReference>
<dbReference type="Pfam" id="PF00684">
    <property type="entry name" value="DnaJ_CXXCXGXG"/>
    <property type="match status" value="1"/>
</dbReference>
<dbReference type="PRINTS" id="PR00625">
    <property type="entry name" value="JDOMAIN"/>
</dbReference>
<dbReference type="SMART" id="SM00271">
    <property type="entry name" value="DnaJ"/>
    <property type="match status" value="1"/>
</dbReference>
<dbReference type="SUPFAM" id="SSF46565">
    <property type="entry name" value="Chaperone J-domain"/>
    <property type="match status" value="1"/>
</dbReference>
<dbReference type="SUPFAM" id="SSF57938">
    <property type="entry name" value="DnaJ/Hsp40 cysteine-rich domain"/>
    <property type="match status" value="1"/>
</dbReference>
<dbReference type="SUPFAM" id="SSF49493">
    <property type="entry name" value="HSP40/DnaJ peptide-binding domain"/>
    <property type="match status" value="2"/>
</dbReference>
<dbReference type="PROSITE" id="PS00636">
    <property type="entry name" value="DNAJ_1"/>
    <property type="match status" value="1"/>
</dbReference>
<dbReference type="PROSITE" id="PS50076">
    <property type="entry name" value="DNAJ_2"/>
    <property type="match status" value="1"/>
</dbReference>
<dbReference type="PROSITE" id="PS51188">
    <property type="entry name" value="ZF_CR"/>
    <property type="match status" value="1"/>
</dbReference>
<protein>
    <recommendedName>
        <fullName evidence="1">Chaperone protein DnaJ</fullName>
    </recommendedName>
</protein>
<proteinExistence type="inferred from homology"/>
<comment type="function">
    <text evidence="1">Participates actively in the response to hyperosmotic and heat shock by preventing the aggregation of stress-denatured proteins and by disaggregating proteins, also in an autonomous, DnaK-independent fashion. Unfolded proteins bind initially to DnaJ; upon interaction with the DnaJ-bound protein, DnaK hydrolyzes its bound ATP, resulting in the formation of a stable complex. GrpE releases ADP from DnaK; ATP binding to DnaK triggers the release of the substrate protein, thus completing the reaction cycle. Several rounds of ATP-dependent interactions between DnaJ, DnaK and GrpE are required for fully efficient folding. Also involved, together with DnaK and GrpE, in the DNA replication of plasmids through activation of initiation proteins.</text>
</comment>
<comment type="cofactor">
    <cofactor evidence="1">
        <name>Zn(2+)</name>
        <dbReference type="ChEBI" id="CHEBI:29105"/>
    </cofactor>
    <text evidence="1">Binds 2 Zn(2+) ions per monomer.</text>
</comment>
<comment type="subunit">
    <text evidence="1">Homodimer.</text>
</comment>
<comment type="subcellular location">
    <subcellularLocation>
        <location evidence="1">Cytoplasm</location>
    </subcellularLocation>
</comment>
<comment type="domain">
    <text evidence="1">The J domain is necessary and sufficient to stimulate DnaK ATPase activity. Zinc center 1 plays an important role in the autonomous, DnaK-independent chaperone activity of DnaJ. Zinc center 2 is essential for interaction with DnaK and for DnaJ activity.</text>
</comment>
<comment type="similarity">
    <text evidence="1">Belongs to the DnaJ family.</text>
</comment>
<evidence type="ECO:0000255" key="1">
    <source>
        <dbReference type="HAMAP-Rule" id="MF_01152"/>
    </source>
</evidence>
<reference key="1">
    <citation type="journal article" date="2003" name="Mol. Microbiol.">
        <title>Genome-based analysis of virulence genes in a non-biofilm-forming Staphylococcus epidermidis strain (ATCC 12228).</title>
        <authorList>
            <person name="Zhang Y.-Q."/>
            <person name="Ren S.-X."/>
            <person name="Li H.-L."/>
            <person name="Wang Y.-X."/>
            <person name="Fu G."/>
            <person name="Yang J."/>
            <person name="Qin Z.-Q."/>
            <person name="Miao Y.-G."/>
            <person name="Wang W.-Y."/>
            <person name="Chen R.-S."/>
            <person name="Shen Y."/>
            <person name="Chen Z."/>
            <person name="Yuan Z.-H."/>
            <person name="Zhao G.-P."/>
            <person name="Qu D."/>
            <person name="Danchin A."/>
            <person name="Wen Y.-M."/>
        </authorList>
    </citation>
    <scope>NUCLEOTIDE SEQUENCE [LARGE SCALE GENOMIC DNA]</scope>
    <source>
        <strain>ATCC 12228 / FDA PCI 1200</strain>
    </source>
</reference>
<organism>
    <name type="scientific">Staphylococcus epidermidis (strain ATCC 12228 / FDA PCI 1200)</name>
    <dbReference type="NCBI Taxonomy" id="176280"/>
    <lineage>
        <taxon>Bacteria</taxon>
        <taxon>Bacillati</taxon>
        <taxon>Bacillota</taxon>
        <taxon>Bacilli</taxon>
        <taxon>Bacillales</taxon>
        <taxon>Staphylococcaceae</taxon>
        <taxon>Staphylococcus</taxon>
    </lineage>
</organism>
<gene>
    <name evidence="1" type="primary">dnaJ</name>
    <name type="ordered locus">SE_1266</name>
</gene>
<feature type="chain" id="PRO_0000070889" description="Chaperone protein DnaJ">
    <location>
        <begin position="1"/>
        <end position="373"/>
    </location>
</feature>
<feature type="domain" description="J" evidence="1">
    <location>
        <begin position="5"/>
        <end position="69"/>
    </location>
</feature>
<feature type="repeat" description="CXXCXGXG motif">
    <location>
        <begin position="143"/>
        <end position="150"/>
    </location>
</feature>
<feature type="repeat" description="CXXCXGXG motif">
    <location>
        <begin position="160"/>
        <end position="167"/>
    </location>
</feature>
<feature type="repeat" description="CXXCXGXG motif">
    <location>
        <begin position="186"/>
        <end position="193"/>
    </location>
</feature>
<feature type="repeat" description="CXXCXGXG motif">
    <location>
        <begin position="200"/>
        <end position="207"/>
    </location>
</feature>
<feature type="zinc finger region" description="CR-type" evidence="1">
    <location>
        <begin position="130"/>
        <end position="212"/>
    </location>
</feature>
<feature type="binding site" evidence="1">
    <location>
        <position position="143"/>
    </location>
    <ligand>
        <name>Zn(2+)</name>
        <dbReference type="ChEBI" id="CHEBI:29105"/>
        <label>1</label>
    </ligand>
</feature>
<feature type="binding site" evidence="1">
    <location>
        <position position="146"/>
    </location>
    <ligand>
        <name>Zn(2+)</name>
        <dbReference type="ChEBI" id="CHEBI:29105"/>
        <label>1</label>
    </ligand>
</feature>
<feature type="binding site" evidence="1">
    <location>
        <position position="160"/>
    </location>
    <ligand>
        <name>Zn(2+)</name>
        <dbReference type="ChEBI" id="CHEBI:29105"/>
        <label>2</label>
    </ligand>
</feature>
<feature type="binding site" evidence="1">
    <location>
        <position position="163"/>
    </location>
    <ligand>
        <name>Zn(2+)</name>
        <dbReference type="ChEBI" id="CHEBI:29105"/>
        <label>2</label>
    </ligand>
</feature>
<feature type="binding site" evidence="1">
    <location>
        <position position="186"/>
    </location>
    <ligand>
        <name>Zn(2+)</name>
        <dbReference type="ChEBI" id="CHEBI:29105"/>
        <label>2</label>
    </ligand>
</feature>
<feature type="binding site" evidence="1">
    <location>
        <position position="189"/>
    </location>
    <ligand>
        <name>Zn(2+)</name>
        <dbReference type="ChEBI" id="CHEBI:29105"/>
        <label>2</label>
    </ligand>
</feature>
<feature type="binding site" evidence="1">
    <location>
        <position position="200"/>
    </location>
    <ligand>
        <name>Zn(2+)</name>
        <dbReference type="ChEBI" id="CHEBI:29105"/>
        <label>1</label>
    </ligand>
</feature>
<feature type="binding site" evidence="1">
    <location>
        <position position="203"/>
    </location>
    <ligand>
        <name>Zn(2+)</name>
        <dbReference type="ChEBI" id="CHEBI:29105"/>
        <label>1</label>
    </ligand>
</feature>
<accession>Q8CP18</accession>
<name>DNAJ_STAES</name>
<keyword id="KW-0143">Chaperone</keyword>
<keyword id="KW-0963">Cytoplasm</keyword>
<keyword id="KW-0235">DNA replication</keyword>
<keyword id="KW-0479">Metal-binding</keyword>
<keyword id="KW-0677">Repeat</keyword>
<keyword id="KW-0346">Stress response</keyword>
<keyword id="KW-0862">Zinc</keyword>
<keyword id="KW-0863">Zinc-finger</keyword>
<sequence>MAKRDYYEVLGVNKSASKDEIKKAYRKLSKKYHPDINKEEGADEKFKEISEAYEVLSDENKRANYDQFGHDGPQGGFGSQGFGGSDFGGFEDIFSSFFGGGSRQRDPNAPRKGDDLQYTMTITFEEAVFGTKKEISIKKDVTCHTCNGDGAKPGTSKKTCSYCNGAGRVSVEQNTILGRVRTEQVCPKCEGSGQEFEEPCPTCKGKGTENKTVKLEVTVPEGVDNEQQVRLAGEGSPGVNGGPHGDLYVVFRVKPSNTFERDGDDIYYNLDISFSQAALGDEIKIPTLKSNVVLTIPAGTQTGKQFRLKDKGVKNVHGYGHGDLFVNIKVVTPTKLNDRQKELLKEFAEINGEDINEQSSNFKDRAKRFFKGE</sequence>